<dbReference type="EMBL" id="M17244">
    <property type="protein sequence ID" value="AAA35098.1"/>
    <property type="status" value="ALT_FRAME"/>
    <property type="molecule type" value="Genomic_DNA"/>
</dbReference>
<dbReference type="EMBL" id="U11583">
    <property type="protein sequence ID" value="AAB65046.1"/>
    <property type="molecule type" value="Genomic_DNA"/>
</dbReference>
<dbReference type="EMBL" id="X66278">
    <property type="protein sequence ID" value="CAA46989.1"/>
    <property type="molecule type" value="Genomic_DNA"/>
</dbReference>
<dbReference type="EMBL" id="BK006934">
    <property type="protein sequence ID" value="DAA06651.1"/>
    <property type="molecule type" value="Genomic_DNA"/>
</dbReference>
<dbReference type="PIR" id="S48934">
    <property type="entry name" value="S48934"/>
</dbReference>
<dbReference type="RefSeq" id="NP_011829.1">
    <property type="nucleotide sequence ID" value="NM_001179114.1"/>
</dbReference>
<dbReference type="BioGRID" id="36388">
    <property type="interactions" value="1340"/>
</dbReference>
<dbReference type="DIP" id="DIP-6824N"/>
<dbReference type="FunCoup" id="P10080">
    <property type="interactions" value="802"/>
</dbReference>
<dbReference type="IntAct" id="P10080">
    <property type="interactions" value="151"/>
</dbReference>
<dbReference type="MINT" id="P10080"/>
<dbReference type="STRING" id="4932.YHL034C"/>
<dbReference type="iPTMnet" id="P10080"/>
<dbReference type="PaxDb" id="4932-YHL034C"/>
<dbReference type="PeptideAtlas" id="P10080"/>
<dbReference type="EnsemblFungi" id="YHL034C_mRNA">
    <property type="protein sequence ID" value="YHL034C"/>
    <property type="gene ID" value="YHL034C"/>
</dbReference>
<dbReference type="GeneID" id="856351"/>
<dbReference type="KEGG" id="sce:YHL034C"/>
<dbReference type="AGR" id="SGD:S000001026"/>
<dbReference type="SGD" id="S000001026">
    <property type="gene designation" value="SBP1"/>
</dbReference>
<dbReference type="VEuPathDB" id="FungiDB:YHL034C"/>
<dbReference type="eggNOG" id="ENOG502QTE4">
    <property type="taxonomic scope" value="Eukaryota"/>
</dbReference>
<dbReference type="HOGENOM" id="CLU_068713_0_0_1"/>
<dbReference type="InParanoid" id="P10080"/>
<dbReference type="OMA" id="FFSKRMN"/>
<dbReference type="OrthoDB" id="439808at2759"/>
<dbReference type="BioCyc" id="YEAST:G3O-31053-MONOMER"/>
<dbReference type="BioGRID-ORCS" id="856351">
    <property type="hits" value="2 hits in 10 CRISPR screens"/>
</dbReference>
<dbReference type="CD-CODE" id="A777E0F8">
    <property type="entry name" value="P-body"/>
</dbReference>
<dbReference type="CD-CODE" id="E03F929F">
    <property type="entry name" value="Stress granule"/>
</dbReference>
<dbReference type="PRO" id="PR:P10080"/>
<dbReference type="Proteomes" id="UP000002311">
    <property type="component" value="Chromosome VIII"/>
</dbReference>
<dbReference type="RNAct" id="P10080">
    <property type="molecule type" value="protein"/>
</dbReference>
<dbReference type="GO" id="GO:0005737">
    <property type="term" value="C:cytoplasm"/>
    <property type="evidence" value="ECO:0000314"/>
    <property type="project" value="SGD"/>
</dbReference>
<dbReference type="GO" id="GO:0010494">
    <property type="term" value="C:cytoplasmic stress granule"/>
    <property type="evidence" value="ECO:0000314"/>
    <property type="project" value="SGD"/>
</dbReference>
<dbReference type="GO" id="GO:0005730">
    <property type="term" value="C:nucleolus"/>
    <property type="evidence" value="ECO:0000314"/>
    <property type="project" value="SGD"/>
</dbReference>
<dbReference type="GO" id="GO:0005634">
    <property type="term" value="C:nucleus"/>
    <property type="evidence" value="ECO:0000318"/>
    <property type="project" value="GO_Central"/>
</dbReference>
<dbReference type="GO" id="GO:0000932">
    <property type="term" value="C:P-body"/>
    <property type="evidence" value="ECO:0000314"/>
    <property type="project" value="SGD"/>
</dbReference>
<dbReference type="GO" id="GO:1990904">
    <property type="term" value="C:ribonucleoprotein complex"/>
    <property type="evidence" value="ECO:0000318"/>
    <property type="project" value="GO_Central"/>
</dbReference>
<dbReference type="GO" id="GO:0031370">
    <property type="term" value="F:eukaryotic initiation factor 4G binding"/>
    <property type="evidence" value="ECO:0000314"/>
    <property type="project" value="SGD"/>
</dbReference>
<dbReference type="GO" id="GO:0048027">
    <property type="term" value="F:mRNA 5'-UTR binding"/>
    <property type="evidence" value="ECO:0000314"/>
    <property type="project" value="SGD"/>
</dbReference>
<dbReference type="GO" id="GO:0003729">
    <property type="term" value="F:mRNA binding"/>
    <property type="evidence" value="ECO:0000314"/>
    <property type="project" value="SGD"/>
</dbReference>
<dbReference type="GO" id="GO:0017148">
    <property type="term" value="P:negative regulation of translation"/>
    <property type="evidence" value="ECO:0000314"/>
    <property type="project" value="SGD"/>
</dbReference>
<dbReference type="GO" id="GO:0032055">
    <property type="term" value="P:negative regulation of translation in response to stress"/>
    <property type="evidence" value="ECO:0000315"/>
    <property type="project" value="SGD"/>
</dbReference>
<dbReference type="GO" id="GO:0045947">
    <property type="term" value="P:negative regulation of translational initiation"/>
    <property type="evidence" value="ECO:0000314"/>
    <property type="project" value="SGD"/>
</dbReference>
<dbReference type="GO" id="GO:0035617">
    <property type="term" value="P:stress granule disassembly"/>
    <property type="evidence" value="ECO:0000314"/>
    <property type="project" value="SGD"/>
</dbReference>
<dbReference type="CDD" id="cd00590">
    <property type="entry name" value="RRM_SF"/>
    <property type="match status" value="1"/>
</dbReference>
<dbReference type="FunFam" id="3.30.70.330:FF:000930">
    <property type="entry name" value="Sbp1p"/>
    <property type="match status" value="1"/>
</dbReference>
<dbReference type="FunFam" id="3.30.70.330:FF:000975">
    <property type="entry name" value="Sbp1p"/>
    <property type="match status" value="1"/>
</dbReference>
<dbReference type="Gene3D" id="3.30.70.330">
    <property type="match status" value="2"/>
</dbReference>
<dbReference type="InterPro" id="IPR012677">
    <property type="entry name" value="Nucleotide-bd_a/b_plait_sf"/>
</dbReference>
<dbReference type="InterPro" id="IPR035979">
    <property type="entry name" value="RBD_domain_sf"/>
</dbReference>
<dbReference type="InterPro" id="IPR000504">
    <property type="entry name" value="RRM_dom"/>
</dbReference>
<dbReference type="InterPro" id="IPR050374">
    <property type="entry name" value="RRT5_SRSF_SR"/>
</dbReference>
<dbReference type="PANTHER" id="PTHR23003:SF56">
    <property type="entry name" value="RIBONUCLEOPROTEIN 1-RELATED"/>
    <property type="match status" value="1"/>
</dbReference>
<dbReference type="PANTHER" id="PTHR23003">
    <property type="entry name" value="RNA RECOGNITION MOTIF RRM DOMAIN CONTAINING PROTEIN"/>
    <property type="match status" value="1"/>
</dbReference>
<dbReference type="Pfam" id="PF00076">
    <property type="entry name" value="RRM_1"/>
    <property type="match status" value="1"/>
</dbReference>
<dbReference type="SMART" id="SM00360">
    <property type="entry name" value="RRM"/>
    <property type="match status" value="2"/>
</dbReference>
<dbReference type="SUPFAM" id="SSF54928">
    <property type="entry name" value="RNA-binding domain, RBD"/>
    <property type="match status" value="2"/>
</dbReference>
<dbReference type="PROSITE" id="PS50102">
    <property type="entry name" value="RRM"/>
    <property type="match status" value="2"/>
</dbReference>
<keyword id="KW-0007">Acetylation</keyword>
<keyword id="KW-0963">Cytoplasm</keyword>
<keyword id="KW-0488">Methylation</keyword>
<keyword id="KW-0539">Nucleus</keyword>
<keyword id="KW-0597">Phosphoprotein</keyword>
<keyword id="KW-1185">Reference proteome</keyword>
<keyword id="KW-0677">Repeat</keyword>
<keyword id="KW-0694">RNA-binding</keyword>
<keyword id="KW-0346">Stress response</keyword>
<protein>
    <recommendedName>
        <fullName>Single-stranded nucleic acid-binding protein</fullName>
    </recommendedName>
</protein>
<feature type="initiator methionine" description="Removed" evidence="16">
    <location>
        <position position="1"/>
    </location>
</feature>
<feature type="chain" id="PRO_0000081964" description="Single-stranded nucleic acid-binding protein">
    <location>
        <begin position="2"/>
        <end position="294"/>
    </location>
</feature>
<feature type="domain" description="RRM 1" evidence="2">
    <location>
        <begin position="37"/>
        <end position="119"/>
    </location>
</feature>
<feature type="domain" description="RRM 2" evidence="2">
    <location>
        <begin position="186"/>
        <end position="274"/>
    </location>
</feature>
<feature type="region of interest" description="Disordered" evidence="3">
    <location>
        <begin position="1"/>
        <end position="30"/>
    </location>
</feature>
<feature type="region of interest" description="RNA-binding RGG-box" evidence="1">
    <location>
        <begin position="131"/>
        <end position="151"/>
    </location>
</feature>
<feature type="region of interest" description="Disordered" evidence="3">
    <location>
        <begin position="151"/>
        <end position="171"/>
    </location>
</feature>
<feature type="region of interest" description="Disordered" evidence="3">
    <location>
        <begin position="275"/>
        <end position="294"/>
    </location>
</feature>
<feature type="compositionally biased region" description="Polar residues" evidence="3">
    <location>
        <begin position="10"/>
        <end position="25"/>
    </location>
</feature>
<feature type="compositionally biased region" description="Gly residues" evidence="3">
    <location>
        <begin position="151"/>
        <end position="169"/>
    </location>
</feature>
<feature type="compositionally biased region" description="Acidic residues" evidence="3">
    <location>
        <begin position="278"/>
        <end position="288"/>
    </location>
</feature>
<feature type="modified residue" description="N-acetylserine" evidence="16">
    <location>
        <position position="2"/>
    </location>
</feature>
<feature type="modified residue" description="Phosphoserine" evidence="9">
    <location>
        <position position="2"/>
    </location>
</feature>
<feature type="modified residue" description="Phosphoserine" evidence="9">
    <location>
        <position position="16"/>
    </location>
</feature>
<feature type="modified residue" description="Phosphothreonine" evidence="9">
    <location>
        <position position="49"/>
    </location>
</feature>
<feature type="modified residue" description="Phosphoserine" evidence="9">
    <location>
        <position position="66"/>
    </location>
</feature>
<feature type="modified residue" description="Phosphothreonine" evidence="9 13 14 15">
    <location>
        <position position="91"/>
    </location>
</feature>
<feature type="modified residue" description="Phosphothreonine" evidence="14">
    <location>
        <position position="119"/>
    </location>
</feature>
<feature type="modified residue" description="Omega-N-methylarginine" evidence="8">
    <location>
        <position position="125"/>
    </location>
</feature>
<feature type="modified residue" description="Dimethylated arginine" evidence="9">
    <location>
        <position position="135"/>
    </location>
</feature>
<feature type="modified residue" description="Dimethylated arginine" evidence="9">
    <location>
        <position position="137"/>
    </location>
</feature>
<feature type="modified residue" description="Dimethylated arginine" evidence="9">
    <location>
        <position position="141"/>
    </location>
</feature>
<feature type="modified residue" description="Dimethylated arginine; alternate" evidence="9">
    <location>
        <position position="145"/>
    </location>
</feature>
<feature type="modified residue" description="Omega-N-methylarginine; alternate" evidence="8 9">
    <location>
        <position position="145"/>
    </location>
</feature>
<feature type="modified residue" description="Omega-N-methylarginine" evidence="9">
    <location>
        <position position="149"/>
    </location>
</feature>
<feature type="modified residue" description="Dimethylated arginine" evidence="9">
    <location>
        <position position="153"/>
    </location>
</feature>
<feature type="modified residue" description="Dimethylated arginine" evidence="9">
    <location>
        <position position="155"/>
    </location>
</feature>
<feature type="modified residue" description="Dimethylated arginine" evidence="9">
    <location>
        <position position="159"/>
    </location>
</feature>
<feature type="modified residue" description="Dimethylated arginine; alternate" evidence="9">
    <location>
        <position position="161"/>
    </location>
</feature>
<feature type="modified residue" description="Omega-N-methylarginine; alternate" evidence="9">
    <location>
        <position position="161"/>
    </location>
</feature>
<feature type="modified residue" description="Dimethylated arginine; alternate" evidence="9">
    <location>
        <position position="165"/>
    </location>
</feature>
<feature type="modified residue" description="Omega-N-methylarginine; alternate" evidence="8">
    <location>
        <position position="165"/>
    </location>
</feature>
<feature type="modified residue" description="Phosphothreonine" evidence="12">
    <location>
        <position position="242"/>
    </location>
</feature>
<feature type="modified residue" description="Phosphoserine" evidence="12">
    <location>
        <position position="244"/>
    </location>
</feature>
<feature type="modified residue" description="Phosphothreonine" evidence="9">
    <location>
        <position position="287"/>
    </location>
</feature>
<feature type="modified residue" description="Phosphoserine" evidence="9">
    <location>
        <position position="289"/>
    </location>
</feature>
<feature type="sequence conflict" description="In Ref. 1; AAA35098." evidence="11" ref="1">
    <original>G</original>
    <variation>S</variation>
    <location>
        <position position="162"/>
    </location>
</feature>
<sequence>MSAEIEEATNAVNNLSINDSEQQPRAPTHKTVIDPEDTIFIGNVAHECTEDDLKQLFVEEFGDEVSVEIPIKEHTDGHIPASKHALVKFPTKIDFDNIKENYDTKVVKDREIHIKRARTPGQMQRGGFRGRGGFRGRGGFRGGFRGGYRGGFRGRGNFRGRGGARGGFNGQKREKIPLDQMERSKDTLYINNVPFKATKEEVAEFFGTDADSISLPMRKMRDQHTGRIFTSDSANRGMAFVTFSGENVDIEAKAEEFKGKVFGDRELTVDVAVIRPENDEEEIEQETGSEEKQE</sequence>
<comment type="function">
    <text evidence="5">Functions in the transition of mRNAs from translation to an mRNP complex destined for decapping. High-copy-number suppressor of decapping defects. Overexpression suppresses decapping defects in both DCP1-2 and DCP2-7 mutations. Acts to promote translational repression of mRNA in conjunction with DHH1 and subsequent mRNA localization to P bodies. Promotes translational repression of mRNA during glucose deprivation.</text>
</comment>
<comment type="subunit">
    <text>Associated with snR10 and snR11 small nuclear RNAs.</text>
</comment>
<comment type="subcellular location">
    <subcellularLocation>
        <location evidence="5 7">Cytoplasm</location>
    </subcellularLocation>
    <subcellularLocation>
        <location evidence="5 6">Nucleus</location>
        <location evidence="5 6">Nucleolus</location>
    </subcellularLocation>
    <subcellularLocation>
        <location evidence="5 7">Cytoplasm</location>
        <location evidence="5 7">P-body</location>
    </subcellularLocation>
    <subcellularLocation>
        <location evidence="7">Cytoplasm</location>
        <location evidence="7">Stress granule</location>
    </subcellularLocation>
</comment>
<comment type="miscellaneous">
    <text evidence="4">Present with 12800 molecules/cell in log phase SD medium.</text>
</comment>
<comment type="similarity">
    <text evidence="11">Belongs to the RRM GAR family.</text>
</comment>
<comment type="sequence caution" evidence="11">
    <conflict type="frameshift">
        <sequence resource="EMBL-CDS" id="AAA35098"/>
    </conflict>
</comment>
<organism>
    <name type="scientific">Saccharomyces cerevisiae (strain ATCC 204508 / S288c)</name>
    <name type="common">Baker's yeast</name>
    <dbReference type="NCBI Taxonomy" id="559292"/>
    <lineage>
        <taxon>Eukaryota</taxon>
        <taxon>Fungi</taxon>
        <taxon>Dikarya</taxon>
        <taxon>Ascomycota</taxon>
        <taxon>Saccharomycotina</taxon>
        <taxon>Saccharomycetes</taxon>
        <taxon>Saccharomycetales</taxon>
        <taxon>Saccharomycetaceae</taxon>
        <taxon>Saccharomyces</taxon>
    </lineage>
</organism>
<reference key="1">
    <citation type="journal article" date="1987" name="Mol. Cell. Biol.">
        <title>Saccharomyces cerevisiae SSB1 protein and its relationship to nucleolar RNA-binding proteins.</title>
        <authorList>
            <person name="Jong A.Y.-S."/>
            <person name="Clark M.W."/>
            <person name="Gilbert M."/>
            <person name="Oehm A."/>
            <person name="Campbell J.L."/>
        </authorList>
    </citation>
    <scope>NUCLEOTIDE SEQUENCE [GENOMIC DNA]</scope>
</reference>
<reference key="2">
    <citation type="journal article" date="1994" name="Science">
        <title>Complete nucleotide sequence of Saccharomyces cerevisiae chromosome VIII.</title>
        <authorList>
            <person name="Johnston M."/>
            <person name="Andrews S."/>
            <person name="Brinkman R."/>
            <person name="Cooper J."/>
            <person name="Ding H."/>
            <person name="Dover J."/>
            <person name="Du Z."/>
            <person name="Favello A."/>
            <person name="Fulton L."/>
            <person name="Gattung S."/>
            <person name="Geisel C."/>
            <person name="Kirsten J."/>
            <person name="Kucaba T."/>
            <person name="Hillier L.W."/>
            <person name="Jier M."/>
            <person name="Johnston L."/>
            <person name="Langston Y."/>
            <person name="Latreille P."/>
            <person name="Louis E.J."/>
            <person name="Macri C."/>
            <person name="Mardis E."/>
            <person name="Menezes S."/>
            <person name="Mouser L."/>
            <person name="Nhan M."/>
            <person name="Rifkin L."/>
            <person name="Riles L."/>
            <person name="St Peter H."/>
            <person name="Trevaskis E."/>
            <person name="Vaughan K."/>
            <person name="Vignati D."/>
            <person name="Wilcox L."/>
            <person name="Wohldman P."/>
            <person name="Waterston R."/>
            <person name="Wilson R."/>
            <person name="Vaudin M."/>
        </authorList>
    </citation>
    <scope>NUCLEOTIDE SEQUENCE [LARGE SCALE GENOMIC DNA]</scope>
    <source>
        <strain>ATCC 204508 / S288c</strain>
    </source>
</reference>
<reference key="3">
    <citation type="journal article" date="2014" name="G3 (Bethesda)">
        <title>The reference genome sequence of Saccharomyces cerevisiae: Then and now.</title>
        <authorList>
            <person name="Engel S.R."/>
            <person name="Dietrich F.S."/>
            <person name="Fisk D.G."/>
            <person name="Binkley G."/>
            <person name="Balakrishnan R."/>
            <person name="Costanzo M.C."/>
            <person name="Dwight S.S."/>
            <person name="Hitz B.C."/>
            <person name="Karra K."/>
            <person name="Nash R.S."/>
            <person name="Weng S."/>
            <person name="Wong E.D."/>
            <person name="Lloyd P."/>
            <person name="Skrzypek M.S."/>
            <person name="Miyasato S.R."/>
            <person name="Simison M."/>
            <person name="Cherry J.M."/>
        </authorList>
    </citation>
    <scope>GENOME REANNOTATION</scope>
    <source>
        <strain>ATCC 204508 / S288c</strain>
    </source>
</reference>
<reference key="4">
    <citation type="journal article" date="1992" name="J. Cell Biol.">
        <title>NOP3 is an essential yeast protein which is required for pre-rRNA processing.</title>
        <authorList>
            <person name="Russell I.D."/>
            <person name="Tollervey D."/>
        </authorList>
    </citation>
    <scope>NUCLEOTIDE SEQUENCE [GENOMIC DNA] OF 162-294</scope>
</reference>
<reference key="5">
    <citation type="journal article" date="1990" name="J. Cell Biol.">
        <title>SSB-1 of the yeast Saccharomyces cerevisiae is a nucleolar-specific, silver-binding protein that is associated with the snR10 and snR11 small nuclear RNAs.</title>
        <authorList>
            <person name="Clark M.W."/>
            <person name="Yip M.L.R."/>
            <person name="Campbell J."/>
            <person name="Abelson J."/>
        </authorList>
    </citation>
    <scope>SUBCELLULAR LOCATION</scope>
</reference>
<reference key="6">
    <citation type="journal article" date="2003" name="Nature">
        <title>Global analysis of protein localization in budding yeast.</title>
        <authorList>
            <person name="Huh W.-K."/>
            <person name="Falvo J.V."/>
            <person name="Gerke L.C."/>
            <person name="Carroll A.S."/>
            <person name="Howson R.W."/>
            <person name="Weissman J.S."/>
            <person name="O'Shea E.K."/>
        </authorList>
    </citation>
    <scope>SUBCELLULAR LOCATION [LARGE SCALE ANALYSIS]</scope>
</reference>
<reference key="7">
    <citation type="journal article" date="2003" name="Nature">
        <title>Global analysis of protein expression in yeast.</title>
        <authorList>
            <person name="Ghaemmaghami S."/>
            <person name="Huh W.-K."/>
            <person name="Bower K."/>
            <person name="Howson R.W."/>
            <person name="Belle A."/>
            <person name="Dephoure N."/>
            <person name="O'Shea E.K."/>
            <person name="Weissman J.S."/>
        </authorList>
    </citation>
    <scope>LEVEL OF PROTEIN EXPRESSION [LARGE SCALE ANALYSIS]</scope>
</reference>
<reference key="8">
    <citation type="journal article" date="2006" name="Mol. Cell. Biol.">
        <title>Sbp1p affects translational repression and decapping in Saccharomyces cerevisiae.</title>
        <authorList>
            <person name="Segal S.P."/>
            <person name="Dunckley T."/>
            <person name="Parker R."/>
        </authorList>
    </citation>
    <scope>FUNCTION</scope>
    <scope>SUBCELLULAR LOCATION</scope>
</reference>
<reference key="9">
    <citation type="journal article" date="2007" name="J. Proteome Res.">
        <title>Large-scale phosphorylation analysis of alpha-factor-arrested Saccharomyces cerevisiae.</title>
        <authorList>
            <person name="Li X."/>
            <person name="Gerber S.A."/>
            <person name="Rudner A.D."/>
            <person name="Beausoleil S.A."/>
            <person name="Haas W."/>
            <person name="Villen J."/>
            <person name="Elias J.E."/>
            <person name="Gygi S.P."/>
        </authorList>
    </citation>
    <scope>PHOSPHORYLATION [LARGE SCALE ANALYSIS] AT THR-91</scope>
    <scope>IDENTIFICATION BY MASS SPECTROMETRY [LARGE SCALE ANALYSIS]</scope>
    <source>
        <strain>ADR376</strain>
    </source>
</reference>
<reference key="10">
    <citation type="journal article" date="2007" name="Proc. Natl. Acad. Sci. U.S.A.">
        <title>Analysis of phosphorylation sites on proteins from Saccharomyces cerevisiae by electron transfer dissociation (ETD) mass spectrometry.</title>
        <authorList>
            <person name="Chi A."/>
            <person name="Huttenhower C."/>
            <person name="Geer L.Y."/>
            <person name="Coon J.J."/>
            <person name="Syka J.E.P."/>
            <person name="Bai D.L."/>
            <person name="Shabanowitz J."/>
            <person name="Burke D.J."/>
            <person name="Troyanskaya O.G."/>
            <person name="Hunt D.F."/>
        </authorList>
    </citation>
    <scope>PHOSPHORYLATION [LARGE SCALE ANALYSIS] AT THR-242 AND SER-244</scope>
    <scope>IDENTIFICATION BY MASS SPECTROMETRY [LARGE SCALE ANALYSIS]</scope>
</reference>
<reference key="11">
    <citation type="journal article" date="2008" name="Mol. Cell. Proteomics">
        <title>A multidimensional chromatography technology for in-depth phosphoproteome analysis.</title>
        <authorList>
            <person name="Albuquerque C.P."/>
            <person name="Smolka M.B."/>
            <person name="Payne S.H."/>
            <person name="Bafna V."/>
            <person name="Eng J."/>
            <person name="Zhou H."/>
        </authorList>
    </citation>
    <scope>PHOSPHORYLATION [LARGE SCALE ANALYSIS] AT THR-91 AND THR-119</scope>
    <scope>IDENTIFICATION BY MASS SPECTROMETRY [LARGE SCALE ANALYSIS]</scope>
</reference>
<reference key="12">
    <citation type="journal article" date="2009" name="Science">
        <title>Global analysis of Cdk1 substrate phosphorylation sites provides insights into evolution.</title>
        <authorList>
            <person name="Holt L.J."/>
            <person name="Tuch B.B."/>
            <person name="Villen J."/>
            <person name="Johnson A.D."/>
            <person name="Gygi S.P."/>
            <person name="Morgan D.O."/>
        </authorList>
    </citation>
    <scope>PHOSPHORYLATION [LARGE SCALE ANALYSIS] AT THR-91</scope>
    <scope>IDENTIFICATION BY MASS SPECTROMETRY [LARGE SCALE ANALYSIS]</scope>
</reference>
<reference key="13">
    <citation type="journal article" date="2012" name="Proc. Natl. Acad. Sci. U.S.A.">
        <title>N-terminal acetylome analyses and functional insights of the N-terminal acetyltransferase NatB.</title>
        <authorList>
            <person name="Van Damme P."/>
            <person name="Lasa M."/>
            <person name="Polevoda B."/>
            <person name="Gazquez C."/>
            <person name="Elosegui-Artola A."/>
            <person name="Kim D.S."/>
            <person name="De Juan-Pardo E."/>
            <person name="Demeyer K."/>
            <person name="Hole K."/>
            <person name="Larrea E."/>
            <person name="Timmerman E."/>
            <person name="Prieto J."/>
            <person name="Arnesen T."/>
            <person name="Sherman F."/>
            <person name="Gevaert K."/>
            <person name="Aldabe R."/>
        </authorList>
    </citation>
    <scope>ACETYLATION [LARGE SCALE ANALYSIS] AT SER-2</scope>
    <scope>CLEAVAGE OF INITIATOR METHIONINE [LARGE SCALE ANALYSIS]</scope>
    <scope>IDENTIFICATION BY MASS SPECTROMETRY [LARGE SCALE ANALYSIS]</scope>
</reference>
<reference key="14">
    <citation type="journal article" date="2013" name="Nat. Struct. Mol. Biol.">
        <title>Global analysis of yeast mRNPs.</title>
        <authorList>
            <person name="Mitchell S.F."/>
            <person name="Jain S."/>
            <person name="She M."/>
            <person name="Parker R."/>
        </authorList>
    </citation>
    <scope>SUBCELLULAR LOCATION</scope>
</reference>
<reference key="15">
    <citation type="journal article" date="2015" name="Proteomics">
        <title>Expanding the yeast protein arginine methylome.</title>
        <authorList>
            <person name="Plank M."/>
            <person name="Fischer R."/>
            <person name="Geoghegan V."/>
            <person name="Charles P.D."/>
            <person name="Konietzny R."/>
            <person name="Acuto O."/>
            <person name="Pears C."/>
            <person name="Schofield C.J."/>
            <person name="Kessler B.M."/>
        </authorList>
    </citation>
    <scope>METHYLATION AT ARG-125; ARG-145 AND ARG-165</scope>
</reference>
<reference key="16">
    <citation type="journal article" date="2021" name="J. Proteome Res.">
        <title>Discovery of arginine methylation, phosphorylation, and their co-occurrence in condensate-associated proteins in Saccharomyces cerevisiae.</title>
        <authorList>
            <person name="Hamey J.J."/>
            <person name="Nguyen A."/>
            <person name="Wilkins M.R."/>
        </authorList>
    </citation>
    <scope>METHYLATION AT ARG-135; ARG-137; ARG-141; ARG-145; ARG-149; ARG-153; ARG-155; ARG-159; ARG-161 AND ARG-165</scope>
    <scope>PHOSPHORYLATION AT SER-2; SER-16; THR-49; SER-66; THR-91; THR-287 AND SER-289</scope>
</reference>
<evidence type="ECO:0000250" key="1"/>
<evidence type="ECO:0000255" key="2">
    <source>
        <dbReference type="PROSITE-ProRule" id="PRU00176"/>
    </source>
</evidence>
<evidence type="ECO:0000256" key="3">
    <source>
        <dbReference type="SAM" id="MobiDB-lite"/>
    </source>
</evidence>
<evidence type="ECO:0000269" key="4">
    <source>
    </source>
</evidence>
<evidence type="ECO:0000269" key="5">
    <source>
    </source>
</evidence>
<evidence type="ECO:0000269" key="6">
    <source>
    </source>
</evidence>
<evidence type="ECO:0000269" key="7">
    <source>
    </source>
</evidence>
<evidence type="ECO:0000269" key="8">
    <source>
    </source>
</evidence>
<evidence type="ECO:0000269" key="9">
    <source>
    </source>
</evidence>
<evidence type="ECO:0000303" key="10">
    <source>
    </source>
</evidence>
<evidence type="ECO:0000305" key="11"/>
<evidence type="ECO:0007744" key="12">
    <source>
    </source>
</evidence>
<evidence type="ECO:0007744" key="13">
    <source>
    </source>
</evidence>
<evidence type="ECO:0007744" key="14">
    <source>
    </source>
</evidence>
<evidence type="ECO:0007744" key="15">
    <source>
    </source>
</evidence>
<evidence type="ECO:0007744" key="16">
    <source>
    </source>
</evidence>
<proteinExistence type="evidence at protein level"/>
<gene>
    <name type="primary">SBP1</name>
    <name evidence="10" type="synonym">SSB1</name>
    <name type="synonym">SSBR1</name>
    <name type="ordered locus">YHL034C</name>
</gene>
<name>SSBP1_YEAST</name>
<accession>P10080</accession>
<accession>D3DKT4</accession>